<dbReference type="EMBL" id="AF289479">
    <property type="protein sequence ID" value="AAL05614.1"/>
    <property type="status" value="ALT_FRAME"/>
    <property type="molecule type" value="Genomic_DNA"/>
</dbReference>
<dbReference type="EMBL" id="AP004053">
    <property type="protein sequence ID" value="BAD21534.1"/>
    <property type="molecule type" value="Genomic_DNA"/>
</dbReference>
<dbReference type="EMBL" id="AP004059">
    <property type="protein sequence ID" value="BAD21574.1"/>
    <property type="molecule type" value="Genomic_DNA"/>
</dbReference>
<dbReference type="EMBL" id="AP008208">
    <property type="protein sequence ID" value="BAF09370.1"/>
    <property type="molecule type" value="Genomic_DNA"/>
</dbReference>
<dbReference type="EMBL" id="AP014958">
    <property type="protein sequence ID" value="BAS79819.1"/>
    <property type="molecule type" value="Genomic_DNA"/>
</dbReference>
<dbReference type="EMBL" id="CM000139">
    <property type="protein sequence ID" value="EAZ23846.1"/>
    <property type="molecule type" value="Genomic_DNA"/>
</dbReference>
<dbReference type="EMBL" id="AK107204">
    <property type="status" value="NOT_ANNOTATED_CDS"/>
    <property type="molecule type" value="mRNA"/>
</dbReference>
<dbReference type="RefSeq" id="XP_015623207.1">
    <property type="nucleotide sequence ID" value="XM_015767721.1"/>
</dbReference>
<dbReference type="SMR" id="Q6K9G1"/>
<dbReference type="FunCoup" id="Q6K9G1">
    <property type="interactions" value="214"/>
</dbReference>
<dbReference type="STRING" id="39947.Q6K9G1"/>
<dbReference type="PaxDb" id="39947-Q6K9G1"/>
<dbReference type="EnsemblPlants" id="Os02t0620600-01">
    <property type="protein sequence ID" value="Os02t0620600-01"/>
    <property type="gene ID" value="Os02g0620600"/>
</dbReference>
<dbReference type="Gramene" id="Os02t0620600-01">
    <property type="protein sequence ID" value="Os02t0620600-01"/>
    <property type="gene ID" value="Os02g0620600"/>
</dbReference>
<dbReference type="KEGG" id="dosa:Os02g0620600"/>
<dbReference type="eggNOG" id="KOG0682">
    <property type="taxonomic scope" value="Eukaryota"/>
</dbReference>
<dbReference type="HOGENOM" id="CLU_000445_33_1_1"/>
<dbReference type="InParanoid" id="Q6K9G1"/>
<dbReference type="OMA" id="CAGSDVM"/>
<dbReference type="OrthoDB" id="534912at2759"/>
<dbReference type="Proteomes" id="UP000000763">
    <property type="component" value="Chromosome 2"/>
</dbReference>
<dbReference type="Proteomes" id="UP000007752">
    <property type="component" value="Chromosome 2"/>
</dbReference>
<dbReference type="Proteomes" id="UP000059680">
    <property type="component" value="Chromosome 2"/>
</dbReference>
<dbReference type="GO" id="GO:0005886">
    <property type="term" value="C:plasma membrane"/>
    <property type="evidence" value="ECO:0000318"/>
    <property type="project" value="GO_Central"/>
</dbReference>
<dbReference type="GO" id="GO:0008519">
    <property type="term" value="F:ammonium channel activity"/>
    <property type="evidence" value="ECO:0000318"/>
    <property type="project" value="GO_Central"/>
</dbReference>
<dbReference type="GO" id="GO:0097272">
    <property type="term" value="P:ammonium homeostasis"/>
    <property type="evidence" value="ECO:0000318"/>
    <property type="project" value="GO_Central"/>
</dbReference>
<dbReference type="GO" id="GO:0072488">
    <property type="term" value="P:ammonium transmembrane transport"/>
    <property type="evidence" value="ECO:0000318"/>
    <property type="project" value="GO_Central"/>
</dbReference>
<dbReference type="FunFam" id="1.10.3430.10:FF:000006">
    <property type="entry name" value="Ammonium transporter"/>
    <property type="match status" value="1"/>
</dbReference>
<dbReference type="Gene3D" id="1.10.3430.10">
    <property type="entry name" value="Ammonium transporter AmtB like domains"/>
    <property type="match status" value="1"/>
</dbReference>
<dbReference type="InterPro" id="IPR029020">
    <property type="entry name" value="Ammonium/urea_transptr"/>
</dbReference>
<dbReference type="InterPro" id="IPR001905">
    <property type="entry name" value="Ammonium_transpt"/>
</dbReference>
<dbReference type="InterPro" id="IPR018047">
    <property type="entry name" value="Ammonium_transpt_CS"/>
</dbReference>
<dbReference type="InterPro" id="IPR024041">
    <property type="entry name" value="NH4_transpt_AmtB-like_dom"/>
</dbReference>
<dbReference type="NCBIfam" id="TIGR00836">
    <property type="entry name" value="amt"/>
    <property type="match status" value="1"/>
</dbReference>
<dbReference type="PANTHER" id="PTHR11730">
    <property type="entry name" value="AMMONIUM TRANSPORTER"/>
    <property type="match status" value="1"/>
</dbReference>
<dbReference type="PANTHER" id="PTHR11730:SF104">
    <property type="entry name" value="AMMONIUM TRANSPORTER 1 MEMBER 2"/>
    <property type="match status" value="1"/>
</dbReference>
<dbReference type="Pfam" id="PF00909">
    <property type="entry name" value="Ammonium_transp"/>
    <property type="match status" value="1"/>
</dbReference>
<dbReference type="SUPFAM" id="SSF111352">
    <property type="entry name" value="Ammonium transporter"/>
    <property type="match status" value="1"/>
</dbReference>
<dbReference type="PROSITE" id="PS01219">
    <property type="entry name" value="AMMONIUM_TRANSP"/>
    <property type="match status" value="1"/>
</dbReference>
<evidence type="ECO:0000255" key="1"/>
<evidence type="ECO:0000269" key="2">
    <source>
    </source>
</evidence>
<evidence type="ECO:0000269" key="3">
    <source>
    </source>
</evidence>
<evidence type="ECO:0000305" key="4"/>
<comment type="function">
    <text evidence="2">Ammonium transporter probably involved in ammonium uptake from the soil and ammonium uptake and retrieval in the vascular system.</text>
</comment>
<comment type="subcellular location">
    <subcellularLocation>
        <location evidence="4">Membrane</location>
        <topology evidence="4">Multi-pass membrane protein</topology>
    </subcellularLocation>
</comment>
<comment type="tissue specificity">
    <text evidence="2">Expressed in exodermis, sclerenchyma, endodermis and pericycle cells of primary root tips.</text>
</comment>
<comment type="induction">
    <text evidence="2 3">By ammonium or glutamine supply in roots.</text>
</comment>
<comment type="similarity">
    <text evidence="4">Belongs to the ammonia transporter channel (TC 1.A.11.2) family.</text>
</comment>
<comment type="sequence caution" evidence="4">
    <conflict type="frameshift">
        <sequence resource="EMBL-CDS" id="AAL05614"/>
    </conflict>
</comment>
<proteinExistence type="evidence at transcript level"/>
<feature type="chain" id="PRO_0000385645" description="Ammonium transporter 1 member 2">
    <location>
        <begin position="1"/>
        <end position="496"/>
    </location>
</feature>
<feature type="transmembrane region" description="Helical" evidence="1">
    <location>
        <begin position="39"/>
        <end position="59"/>
    </location>
</feature>
<feature type="transmembrane region" description="Helical" evidence="1">
    <location>
        <begin position="74"/>
        <end position="94"/>
    </location>
</feature>
<feature type="transmembrane region" description="Helical" evidence="1">
    <location>
        <begin position="120"/>
        <end position="140"/>
    </location>
</feature>
<feature type="transmembrane region" description="Helical" evidence="1">
    <location>
        <begin position="148"/>
        <end position="168"/>
    </location>
</feature>
<feature type="transmembrane region" description="Helical" evidence="1">
    <location>
        <begin position="192"/>
        <end position="212"/>
    </location>
</feature>
<feature type="transmembrane region" description="Helical" evidence="1">
    <location>
        <begin position="236"/>
        <end position="256"/>
    </location>
</feature>
<feature type="transmembrane region" description="Helical" evidence="1">
    <location>
        <begin position="274"/>
        <end position="296"/>
    </location>
</feature>
<feature type="transmembrane region" description="Helical" evidence="1">
    <location>
        <begin position="307"/>
        <end position="327"/>
    </location>
</feature>
<feature type="transmembrane region" description="Helical" evidence="1">
    <location>
        <begin position="331"/>
        <end position="351"/>
    </location>
</feature>
<feature type="transmembrane region" description="Helical" evidence="1">
    <location>
        <begin position="360"/>
        <end position="380"/>
    </location>
</feature>
<feature type="transmembrane region" description="Helical" evidence="1">
    <location>
        <begin position="412"/>
        <end position="432"/>
    </location>
</feature>
<feature type="sequence conflict" description="In Ref. 6; AK107204." evidence="4" ref="6">
    <original>A</original>
    <variation>V</variation>
    <location>
        <position position="63"/>
    </location>
</feature>
<feature type="sequence conflict" description="In Ref. 6; AK107204." evidence="4" ref="6">
    <original>K</original>
    <variation>N</variation>
    <location>
        <position position="103"/>
    </location>
</feature>
<feature type="sequence conflict" description="In Ref. 1; AAL05614." evidence="4" ref="1">
    <original>GGVAGLWGALIEGPRIG</original>
    <variation>AACRTLGRPHRGPPHW</variation>
    <location>
        <begin position="202"/>
        <end position="218"/>
    </location>
</feature>
<feature type="sequence conflict" description="In Ref. 1; AAL05614 and 5; EAZ23846." evidence="4" ref="1 5">
    <original>V</original>
    <variation>F</variation>
    <location>
        <position position="475"/>
    </location>
</feature>
<keyword id="KW-0924">Ammonia transport</keyword>
<keyword id="KW-0472">Membrane</keyword>
<keyword id="KW-1185">Reference proteome</keyword>
<keyword id="KW-0812">Transmembrane</keyword>
<keyword id="KW-1133">Transmembrane helix</keyword>
<keyword id="KW-0813">Transport</keyword>
<reference key="1">
    <citation type="submission" date="2000-07" db="EMBL/GenBank/DDBJ databases">
        <title>Cloning and characterization of three ammonium transporter genes from rice.</title>
        <authorList>
            <person name="Hoque M.S."/>
            <person name="Masle J."/>
            <person name="Udvardi M.K."/>
            <person name="Upadhyaya N.M."/>
        </authorList>
    </citation>
    <scope>NUCLEOTIDE SEQUENCE [GENOMIC DNA]</scope>
</reference>
<reference key="2">
    <citation type="journal article" date="2005" name="Nature">
        <title>The map-based sequence of the rice genome.</title>
        <authorList>
            <consortium name="International rice genome sequencing project (IRGSP)"/>
        </authorList>
    </citation>
    <scope>NUCLEOTIDE SEQUENCE [LARGE SCALE GENOMIC DNA]</scope>
    <source>
        <strain>cv. Nipponbare</strain>
    </source>
</reference>
<reference key="3">
    <citation type="journal article" date="2008" name="Nucleic Acids Res.">
        <title>The rice annotation project database (RAP-DB): 2008 update.</title>
        <authorList>
            <consortium name="The rice annotation project (RAP)"/>
        </authorList>
    </citation>
    <scope>GENOME REANNOTATION</scope>
    <source>
        <strain>cv. Nipponbare</strain>
    </source>
</reference>
<reference key="4">
    <citation type="journal article" date="2013" name="Rice">
        <title>Improvement of the Oryza sativa Nipponbare reference genome using next generation sequence and optical map data.</title>
        <authorList>
            <person name="Kawahara Y."/>
            <person name="de la Bastide M."/>
            <person name="Hamilton J.P."/>
            <person name="Kanamori H."/>
            <person name="McCombie W.R."/>
            <person name="Ouyang S."/>
            <person name="Schwartz D.C."/>
            <person name="Tanaka T."/>
            <person name="Wu J."/>
            <person name="Zhou S."/>
            <person name="Childs K.L."/>
            <person name="Davidson R.M."/>
            <person name="Lin H."/>
            <person name="Quesada-Ocampo L."/>
            <person name="Vaillancourt B."/>
            <person name="Sakai H."/>
            <person name="Lee S.S."/>
            <person name="Kim J."/>
            <person name="Numa H."/>
            <person name="Itoh T."/>
            <person name="Buell C.R."/>
            <person name="Matsumoto T."/>
        </authorList>
    </citation>
    <scope>GENOME REANNOTATION</scope>
    <source>
        <strain>cv. Nipponbare</strain>
    </source>
</reference>
<reference key="5">
    <citation type="journal article" date="2005" name="PLoS Biol.">
        <title>The genomes of Oryza sativa: a history of duplications.</title>
        <authorList>
            <person name="Yu J."/>
            <person name="Wang J."/>
            <person name="Lin W."/>
            <person name="Li S."/>
            <person name="Li H."/>
            <person name="Zhou J."/>
            <person name="Ni P."/>
            <person name="Dong W."/>
            <person name="Hu S."/>
            <person name="Zeng C."/>
            <person name="Zhang J."/>
            <person name="Zhang Y."/>
            <person name="Li R."/>
            <person name="Xu Z."/>
            <person name="Li S."/>
            <person name="Li X."/>
            <person name="Zheng H."/>
            <person name="Cong L."/>
            <person name="Lin L."/>
            <person name="Yin J."/>
            <person name="Geng J."/>
            <person name="Li G."/>
            <person name="Shi J."/>
            <person name="Liu J."/>
            <person name="Lv H."/>
            <person name="Li J."/>
            <person name="Wang J."/>
            <person name="Deng Y."/>
            <person name="Ran L."/>
            <person name="Shi X."/>
            <person name="Wang X."/>
            <person name="Wu Q."/>
            <person name="Li C."/>
            <person name="Ren X."/>
            <person name="Wang J."/>
            <person name="Wang X."/>
            <person name="Li D."/>
            <person name="Liu D."/>
            <person name="Zhang X."/>
            <person name="Ji Z."/>
            <person name="Zhao W."/>
            <person name="Sun Y."/>
            <person name="Zhang Z."/>
            <person name="Bao J."/>
            <person name="Han Y."/>
            <person name="Dong L."/>
            <person name="Ji J."/>
            <person name="Chen P."/>
            <person name="Wu S."/>
            <person name="Liu J."/>
            <person name="Xiao Y."/>
            <person name="Bu D."/>
            <person name="Tan J."/>
            <person name="Yang L."/>
            <person name="Ye C."/>
            <person name="Zhang J."/>
            <person name="Xu J."/>
            <person name="Zhou Y."/>
            <person name="Yu Y."/>
            <person name="Zhang B."/>
            <person name="Zhuang S."/>
            <person name="Wei H."/>
            <person name="Liu B."/>
            <person name="Lei M."/>
            <person name="Yu H."/>
            <person name="Li Y."/>
            <person name="Xu H."/>
            <person name="Wei S."/>
            <person name="He X."/>
            <person name="Fang L."/>
            <person name="Zhang Z."/>
            <person name="Zhang Y."/>
            <person name="Huang X."/>
            <person name="Su Z."/>
            <person name="Tong W."/>
            <person name="Li J."/>
            <person name="Tong Z."/>
            <person name="Li S."/>
            <person name="Ye J."/>
            <person name="Wang L."/>
            <person name="Fang L."/>
            <person name="Lei T."/>
            <person name="Chen C.-S."/>
            <person name="Chen H.-C."/>
            <person name="Xu Z."/>
            <person name="Li H."/>
            <person name="Huang H."/>
            <person name="Zhang F."/>
            <person name="Xu H."/>
            <person name="Li N."/>
            <person name="Zhao C."/>
            <person name="Li S."/>
            <person name="Dong L."/>
            <person name="Huang Y."/>
            <person name="Li L."/>
            <person name="Xi Y."/>
            <person name="Qi Q."/>
            <person name="Li W."/>
            <person name="Zhang B."/>
            <person name="Hu W."/>
            <person name="Zhang Y."/>
            <person name="Tian X."/>
            <person name="Jiao Y."/>
            <person name="Liang X."/>
            <person name="Jin J."/>
            <person name="Gao L."/>
            <person name="Zheng W."/>
            <person name="Hao B."/>
            <person name="Liu S.-M."/>
            <person name="Wang W."/>
            <person name="Yuan L."/>
            <person name="Cao M."/>
            <person name="McDermott J."/>
            <person name="Samudrala R."/>
            <person name="Wang J."/>
            <person name="Wong G.K.-S."/>
            <person name="Yang H."/>
        </authorList>
    </citation>
    <scope>NUCLEOTIDE SEQUENCE [LARGE SCALE GENOMIC DNA]</scope>
    <source>
        <strain>cv. Nipponbare</strain>
    </source>
</reference>
<reference key="6">
    <citation type="journal article" date="2003" name="Science">
        <title>Collection, mapping, and annotation of over 28,000 cDNA clones from japonica rice.</title>
        <authorList>
            <consortium name="The rice full-length cDNA consortium"/>
        </authorList>
    </citation>
    <scope>NUCLEOTIDE SEQUENCE [LARGE SCALE MRNA]</scope>
    <source>
        <strain>cv. Nipponbare</strain>
    </source>
</reference>
<reference key="7">
    <citation type="journal article" date="2003" name="Plant Cell Physiol.">
        <title>Distinct expression and function of three ammonium transporter genes (OsAMT1;1-1;3) in rice.</title>
        <authorList>
            <person name="Sonoda Y."/>
            <person name="Ikeda A."/>
            <person name="Saiki S."/>
            <person name="von Wiren N."/>
            <person name="Yamaya T."/>
            <person name="Yamaguchi J."/>
        </authorList>
    </citation>
    <scope>FUNCTION</scope>
    <scope>TISSUE SPECIFICITY</scope>
    <scope>INDUCTION</scope>
</reference>
<reference key="8">
    <citation type="journal article" date="2003" name="Plant Cell Physiol.">
        <title>Feedback regulation of the ammonium transporter gene family AMT1 by glutamine in rice.</title>
        <authorList>
            <person name="Sonoda Y."/>
            <person name="Ikeda A."/>
            <person name="Saiki S."/>
            <person name="Yamaya T."/>
            <person name="Yamaguchi J."/>
        </authorList>
    </citation>
    <scope>INDUCTION</scope>
</reference>
<name>AMT12_ORYSJ</name>
<protein>
    <recommendedName>
        <fullName>Ammonium transporter 1 member 2</fullName>
        <shortName>OsAMT1;2</shortName>
    </recommendedName>
</protein>
<organism>
    <name type="scientific">Oryza sativa subsp. japonica</name>
    <name type="common">Rice</name>
    <dbReference type="NCBI Taxonomy" id="39947"/>
    <lineage>
        <taxon>Eukaryota</taxon>
        <taxon>Viridiplantae</taxon>
        <taxon>Streptophyta</taxon>
        <taxon>Embryophyta</taxon>
        <taxon>Tracheophyta</taxon>
        <taxon>Spermatophyta</taxon>
        <taxon>Magnoliopsida</taxon>
        <taxon>Liliopsida</taxon>
        <taxon>Poales</taxon>
        <taxon>Poaceae</taxon>
        <taxon>BOP clade</taxon>
        <taxon>Oryzoideae</taxon>
        <taxon>Oryzeae</taxon>
        <taxon>Oryzinae</taxon>
        <taxon>Oryza</taxon>
        <taxon>Oryza sativa</taxon>
    </lineage>
</organism>
<accession>Q6K9G1</accession>
<accession>A0A0P0VLW2</accession>
<accession>A3A957</accession>
<accession>Q947M9</accession>
<gene>
    <name type="primary">AMT1-2</name>
    <name type="synonym">AMT1-3</name>
    <name type="ordered locus">Os02g0620600</name>
    <name type="ordered locus">LOC_Os02g40730</name>
    <name type="ORF">OJ1234_B11.3</name>
    <name type="ORF">OJ1372_D06.28</name>
    <name type="ORF">OsJ_07562</name>
</gene>
<sequence>MATCADTLGPLLGTAAANATDYLCNQFADTTSAVDSTYLLFSAYLVFAMQLGFAMLCAGSVRAKNTMNIMLTNVLDAAAGALFYYLFGFAFAFGAPSNGFIGKHFFGLKQVPQVGFDYSFFLFQWAFAIAAAGITSGSIAERTQFVAYLIYSAFLTGFVYPVVSHWIWSADGWASASRTSGSLLFGSGVIDFAGSGVVHMVGGVAGLWGALIEGPRIGRFDHAGRSVALRGHSASLVVLGSFLLWFGWYGFNPGSFLTILKSYGPPGSIHGQWSAVGRTAVTTTLAGSTAALTTLFGKRLQTGHWNVIDVCNGLLGGFAAITAGCSVVDPWAAIICGFVSAWVLIGLNALAARLKFDDPLEAAQLHGGCGAWGVIFTALFARKEYVDQIFGQPGRPYGLFMGGGGRLLGAHIVVILVIAAWVSFTMAPLFLVLNKLGLLRISAEDEMAGMDQTRHGGFAYAYHDDDASGKPDRSVGGFMLKSAHGTQVAAEMGGHV</sequence>